<dbReference type="EC" id="1.3.3.3" evidence="1"/>
<dbReference type="EMBL" id="BX569694">
    <property type="protein sequence ID" value="CAE08555.1"/>
    <property type="status" value="ALT_INIT"/>
    <property type="molecule type" value="Genomic_DNA"/>
</dbReference>
<dbReference type="RefSeq" id="WP_042503844.1">
    <property type="nucleotide sequence ID" value="NC_005070.1"/>
</dbReference>
<dbReference type="SMR" id="Q7U4M7"/>
<dbReference type="STRING" id="84588.SYNW2040"/>
<dbReference type="KEGG" id="syw:SYNW2040"/>
<dbReference type="eggNOG" id="COG0408">
    <property type="taxonomic scope" value="Bacteria"/>
</dbReference>
<dbReference type="HOGENOM" id="CLU_026169_0_1_3"/>
<dbReference type="UniPathway" id="UPA00251">
    <property type="reaction ID" value="UER00322"/>
</dbReference>
<dbReference type="Proteomes" id="UP000001422">
    <property type="component" value="Chromosome"/>
</dbReference>
<dbReference type="GO" id="GO:0005737">
    <property type="term" value="C:cytoplasm"/>
    <property type="evidence" value="ECO:0007669"/>
    <property type="project" value="UniProtKB-SubCell"/>
</dbReference>
<dbReference type="GO" id="GO:0004109">
    <property type="term" value="F:coproporphyrinogen oxidase activity"/>
    <property type="evidence" value="ECO:0007669"/>
    <property type="project" value="UniProtKB-UniRule"/>
</dbReference>
<dbReference type="GO" id="GO:0046872">
    <property type="term" value="F:metal ion binding"/>
    <property type="evidence" value="ECO:0007669"/>
    <property type="project" value="UniProtKB-KW"/>
</dbReference>
<dbReference type="GO" id="GO:0042803">
    <property type="term" value="F:protein homodimerization activity"/>
    <property type="evidence" value="ECO:0000250"/>
    <property type="project" value="UniProtKB"/>
</dbReference>
<dbReference type="GO" id="GO:0015995">
    <property type="term" value="P:chlorophyll biosynthetic process"/>
    <property type="evidence" value="ECO:0007669"/>
    <property type="project" value="UniProtKB-UniRule"/>
</dbReference>
<dbReference type="GO" id="GO:0006782">
    <property type="term" value="P:protoporphyrinogen IX biosynthetic process"/>
    <property type="evidence" value="ECO:0007669"/>
    <property type="project" value="UniProtKB-UniRule"/>
</dbReference>
<dbReference type="FunFam" id="3.40.1500.10:FF:000007">
    <property type="entry name" value="Oxygen-dependent coproporphyrinogen-III oxidase"/>
    <property type="match status" value="1"/>
</dbReference>
<dbReference type="Gene3D" id="3.40.1500.10">
    <property type="entry name" value="Coproporphyrinogen III oxidase, aerobic"/>
    <property type="match status" value="1"/>
</dbReference>
<dbReference type="HAMAP" id="MF_00333">
    <property type="entry name" value="Coprogen_oxidas"/>
    <property type="match status" value="1"/>
</dbReference>
<dbReference type="InterPro" id="IPR001260">
    <property type="entry name" value="Coprogen_oxidase_aer"/>
</dbReference>
<dbReference type="InterPro" id="IPR036406">
    <property type="entry name" value="Coprogen_oxidase_aer_sf"/>
</dbReference>
<dbReference type="InterPro" id="IPR018375">
    <property type="entry name" value="Coprogen_oxidase_CS"/>
</dbReference>
<dbReference type="NCBIfam" id="NF003727">
    <property type="entry name" value="PRK05330.1"/>
    <property type="match status" value="1"/>
</dbReference>
<dbReference type="PANTHER" id="PTHR10755">
    <property type="entry name" value="COPROPORPHYRINOGEN III OXIDASE, MITOCHONDRIAL"/>
    <property type="match status" value="1"/>
</dbReference>
<dbReference type="PANTHER" id="PTHR10755:SF0">
    <property type="entry name" value="OXYGEN-DEPENDENT COPROPORPHYRINOGEN-III OXIDASE, MITOCHONDRIAL"/>
    <property type="match status" value="1"/>
</dbReference>
<dbReference type="Pfam" id="PF01218">
    <property type="entry name" value="Coprogen_oxidas"/>
    <property type="match status" value="1"/>
</dbReference>
<dbReference type="PIRSF" id="PIRSF000166">
    <property type="entry name" value="Coproporphyri_ox"/>
    <property type="match status" value="1"/>
</dbReference>
<dbReference type="PRINTS" id="PR00073">
    <property type="entry name" value="COPRGNOXDASE"/>
</dbReference>
<dbReference type="SUPFAM" id="SSF102886">
    <property type="entry name" value="Coproporphyrinogen III oxidase"/>
    <property type="match status" value="1"/>
</dbReference>
<dbReference type="PROSITE" id="PS01021">
    <property type="entry name" value="COPROGEN_OXIDASE"/>
    <property type="match status" value="1"/>
</dbReference>
<proteinExistence type="inferred from homology"/>
<protein>
    <recommendedName>
        <fullName evidence="1">Oxygen-dependent coproporphyrinogen-III oxidase</fullName>
        <shortName evidence="1">CPO</shortName>
        <shortName evidence="1">Coprogen oxidase</shortName>
        <shortName evidence="1">Coproporphyrinogenase</shortName>
        <ecNumber evidence="1">1.3.3.3</ecNumber>
    </recommendedName>
</protein>
<sequence length="363" mass="40855">MVRSLVRRLLGRSQNNGTAAPALELPPEDSRARARAMVMGLQDEICAGLESLDGEGTFVEESWERPEGGGGRSRVMREGLVFEQGGVNFSEVQGQELPPSILKQRPEAKGHPWFATGTSMVLHPHNPYIPTVHLNYRYFEAGPVWWFGGGADLTPYYPFLEDARHFHRTHQAACDSVHPDLHKVFKPWCDEYFFLKHRGETRGVGGIFYDYQDSSGVLYKGQDPSGPAAGVSAQLGARPLGWEQLFALGQANGRAFLPSYAPIVEKRHPMAYGDRERQFQLYRRGRYVEFNLVWDRGTIFGLQTNGRTESILMSLPPLVRWEYGYKAEAGSREALLTELFTKPQDWLGDASLEDRCRPHGAIN</sequence>
<organism>
    <name type="scientific">Parasynechococcus marenigrum (strain WH8102)</name>
    <dbReference type="NCBI Taxonomy" id="84588"/>
    <lineage>
        <taxon>Bacteria</taxon>
        <taxon>Bacillati</taxon>
        <taxon>Cyanobacteriota</taxon>
        <taxon>Cyanophyceae</taxon>
        <taxon>Synechococcales</taxon>
        <taxon>Prochlorococcaceae</taxon>
        <taxon>Parasynechococcus</taxon>
        <taxon>Parasynechococcus marenigrum</taxon>
    </lineage>
</organism>
<keyword id="KW-0149">Chlorophyll biosynthesis</keyword>
<keyword id="KW-0963">Cytoplasm</keyword>
<keyword id="KW-0350">Heme biosynthesis</keyword>
<keyword id="KW-0479">Metal-binding</keyword>
<keyword id="KW-0560">Oxidoreductase</keyword>
<keyword id="KW-0627">Porphyrin biosynthesis</keyword>
<name>HEM6_PARMW</name>
<comment type="function">
    <text evidence="1">Involved in the heme and chlorophyll biosynthesis. Catalyzes the aerobic oxidative decarboxylation of propionate groups of rings A and B of coproporphyrinogen-III to yield the vinyl groups in protoporphyrinogen-IX.</text>
</comment>
<comment type="catalytic activity">
    <reaction evidence="1">
        <text>coproporphyrinogen III + O2 + 2 H(+) = protoporphyrinogen IX + 2 CO2 + 2 H2O</text>
        <dbReference type="Rhea" id="RHEA:18257"/>
        <dbReference type="ChEBI" id="CHEBI:15377"/>
        <dbReference type="ChEBI" id="CHEBI:15378"/>
        <dbReference type="ChEBI" id="CHEBI:15379"/>
        <dbReference type="ChEBI" id="CHEBI:16526"/>
        <dbReference type="ChEBI" id="CHEBI:57307"/>
        <dbReference type="ChEBI" id="CHEBI:57309"/>
        <dbReference type="EC" id="1.3.3.3"/>
    </reaction>
</comment>
<comment type="cofactor">
    <cofactor evidence="1">
        <name>a divalent metal cation</name>
        <dbReference type="ChEBI" id="CHEBI:60240"/>
    </cofactor>
</comment>
<comment type="pathway">
    <text evidence="1">Porphyrin-containing compound metabolism; protoporphyrin-IX biosynthesis; protoporphyrinogen-IX from coproporphyrinogen-III (O2 route): step 1/1.</text>
</comment>
<comment type="subunit">
    <text evidence="1">Homodimer.</text>
</comment>
<comment type="subcellular location">
    <subcellularLocation>
        <location evidence="1">Cytoplasm</location>
    </subcellularLocation>
</comment>
<comment type="similarity">
    <text evidence="1">Belongs to the aerobic coproporphyrinogen-III oxidase family.</text>
</comment>
<comment type="sequence caution" evidence="2">
    <conflict type="erroneous initiation">
        <sequence resource="EMBL-CDS" id="CAE08555"/>
    </conflict>
    <text>Extended N-terminus.</text>
</comment>
<evidence type="ECO:0000255" key="1">
    <source>
        <dbReference type="HAMAP-Rule" id="MF_00333"/>
    </source>
</evidence>
<evidence type="ECO:0000305" key="2"/>
<feature type="chain" id="PRO_0000109924" description="Oxygen-dependent coproporphyrinogen-III oxidase">
    <location>
        <begin position="1"/>
        <end position="363"/>
    </location>
</feature>
<feature type="region of interest" description="Important for dimerization" evidence="1">
    <location>
        <begin position="287"/>
        <end position="322"/>
    </location>
</feature>
<feature type="active site" description="Proton donor" evidence="1">
    <location>
        <position position="133"/>
    </location>
</feature>
<feature type="binding site" evidence="1">
    <location>
        <position position="119"/>
    </location>
    <ligand>
        <name>substrate</name>
    </ligand>
</feature>
<feature type="binding site" evidence="1">
    <location>
        <position position="123"/>
    </location>
    <ligand>
        <name>a divalent metal cation</name>
        <dbReference type="ChEBI" id="CHEBI:60240"/>
    </ligand>
</feature>
<feature type="binding site" evidence="1">
    <location>
        <position position="133"/>
    </location>
    <ligand>
        <name>a divalent metal cation</name>
        <dbReference type="ChEBI" id="CHEBI:60240"/>
    </ligand>
</feature>
<feature type="binding site" evidence="1">
    <location>
        <begin position="135"/>
        <end position="137"/>
    </location>
    <ligand>
        <name>substrate</name>
    </ligand>
</feature>
<feature type="binding site" evidence="1">
    <location>
        <position position="167"/>
    </location>
    <ligand>
        <name>a divalent metal cation</name>
        <dbReference type="ChEBI" id="CHEBI:60240"/>
    </ligand>
</feature>
<feature type="binding site" evidence="1">
    <location>
        <position position="197"/>
    </location>
    <ligand>
        <name>a divalent metal cation</name>
        <dbReference type="ChEBI" id="CHEBI:60240"/>
    </ligand>
</feature>
<feature type="site" description="Important for dimerization" evidence="1">
    <location>
        <position position="197"/>
    </location>
</feature>
<gene>
    <name evidence="1" type="primary">hemF</name>
    <name type="ordered locus">SYNW2040</name>
</gene>
<reference key="1">
    <citation type="journal article" date="2003" name="Nature">
        <title>The genome of a motile marine Synechococcus.</title>
        <authorList>
            <person name="Palenik B."/>
            <person name="Brahamsha B."/>
            <person name="Larimer F.W."/>
            <person name="Land M.L."/>
            <person name="Hauser L."/>
            <person name="Chain P."/>
            <person name="Lamerdin J.E."/>
            <person name="Regala W."/>
            <person name="Allen E.E."/>
            <person name="McCarren J."/>
            <person name="Paulsen I.T."/>
            <person name="Dufresne A."/>
            <person name="Partensky F."/>
            <person name="Webb E.A."/>
            <person name="Waterbury J."/>
        </authorList>
    </citation>
    <scope>NUCLEOTIDE SEQUENCE [LARGE SCALE GENOMIC DNA]</scope>
    <source>
        <strain>WH8102</strain>
    </source>
</reference>
<accession>Q7U4M7</accession>